<proteinExistence type="evidence at transcript level"/>
<evidence type="ECO:0000250" key="1"/>
<evidence type="ECO:0000255" key="2">
    <source>
        <dbReference type="PROSITE-ProRule" id="PRU00223"/>
    </source>
</evidence>
<evidence type="ECO:0000256" key="3">
    <source>
        <dbReference type="SAM" id="MobiDB-lite"/>
    </source>
</evidence>
<evidence type="ECO:0000305" key="4"/>
<gene>
    <name type="primary">WRKY14</name>
    <name type="ordered locus">At1g30650</name>
    <name type="ORF">T5I8.10</name>
</gene>
<protein>
    <recommendedName>
        <fullName>Probable WRKY transcription factor 14</fullName>
    </recommendedName>
    <alternativeName>
        <fullName>AR411</fullName>
    </alternativeName>
    <alternativeName>
        <fullName>WRKY DNA-binding protein 14</fullName>
    </alternativeName>
</protein>
<organism>
    <name type="scientific">Arabidopsis thaliana</name>
    <name type="common">Mouse-ear cress</name>
    <dbReference type="NCBI Taxonomy" id="3702"/>
    <lineage>
        <taxon>Eukaryota</taxon>
        <taxon>Viridiplantae</taxon>
        <taxon>Streptophyta</taxon>
        <taxon>Embryophyta</taxon>
        <taxon>Tracheophyta</taxon>
        <taxon>Spermatophyta</taxon>
        <taxon>Magnoliopsida</taxon>
        <taxon>eudicotyledons</taxon>
        <taxon>Gunneridae</taxon>
        <taxon>Pentapetalae</taxon>
        <taxon>rosids</taxon>
        <taxon>malvids</taxon>
        <taxon>Brassicales</taxon>
        <taxon>Brassicaceae</taxon>
        <taxon>Camelineae</taxon>
        <taxon>Arabidopsis</taxon>
    </lineage>
</organism>
<dbReference type="EMBL" id="AC007060">
    <property type="protein sequence ID" value="AAD25752.1"/>
    <property type="status" value="ALT_INIT"/>
    <property type="molecule type" value="Genomic_DNA"/>
</dbReference>
<dbReference type="EMBL" id="CP002684">
    <property type="protein sequence ID" value="AEE31256.1"/>
    <property type="molecule type" value="Genomic_DNA"/>
</dbReference>
<dbReference type="EMBL" id="BT006468">
    <property type="protein sequence ID" value="AAP21276.1"/>
    <property type="molecule type" value="mRNA"/>
</dbReference>
<dbReference type="EMBL" id="AY052646">
    <property type="protein sequence ID" value="AAL11007.1"/>
    <property type="molecule type" value="mRNA"/>
</dbReference>
<dbReference type="EMBL" id="AY085482">
    <property type="protein sequence ID" value="AAM62708.1"/>
    <property type="molecule type" value="mRNA"/>
</dbReference>
<dbReference type="EMBL" id="D88748">
    <property type="protein sequence ID" value="BAA13689.1"/>
    <property type="status" value="ALT_FRAME"/>
    <property type="molecule type" value="mRNA"/>
</dbReference>
<dbReference type="PIR" id="H86431">
    <property type="entry name" value="H86431"/>
</dbReference>
<dbReference type="RefSeq" id="NP_564359.1">
    <property type="nucleotide sequence ID" value="NM_102802.2"/>
</dbReference>
<dbReference type="SMR" id="Q9SA80"/>
<dbReference type="FunCoup" id="Q9SA80">
    <property type="interactions" value="116"/>
</dbReference>
<dbReference type="STRING" id="3702.Q9SA80"/>
<dbReference type="iPTMnet" id="Q9SA80"/>
<dbReference type="PaxDb" id="3702-AT1G30650.1"/>
<dbReference type="ProteomicsDB" id="246415"/>
<dbReference type="EnsemblPlants" id="AT1G30650.1">
    <property type="protein sequence ID" value="AT1G30650.1"/>
    <property type="gene ID" value="AT1G30650"/>
</dbReference>
<dbReference type="GeneID" id="839945"/>
<dbReference type="Gramene" id="AT1G30650.1">
    <property type="protein sequence ID" value="AT1G30650.1"/>
    <property type="gene ID" value="AT1G30650"/>
</dbReference>
<dbReference type="KEGG" id="ath:AT1G30650"/>
<dbReference type="Araport" id="AT1G30650"/>
<dbReference type="TAIR" id="AT1G30650">
    <property type="gene designation" value="WRKY14"/>
</dbReference>
<dbReference type="eggNOG" id="ENOG502QU8N">
    <property type="taxonomic scope" value="Eukaryota"/>
</dbReference>
<dbReference type="HOGENOM" id="CLU_029232_3_0_1"/>
<dbReference type="InParanoid" id="Q9SA80"/>
<dbReference type="OMA" id="DMENFQG"/>
<dbReference type="OrthoDB" id="1937086at2759"/>
<dbReference type="PhylomeDB" id="Q9SA80"/>
<dbReference type="PRO" id="PR:Q9SA80"/>
<dbReference type="Proteomes" id="UP000006548">
    <property type="component" value="Chromosome 1"/>
</dbReference>
<dbReference type="ExpressionAtlas" id="Q9SA80">
    <property type="expression patterns" value="baseline and differential"/>
</dbReference>
<dbReference type="GO" id="GO:0005634">
    <property type="term" value="C:nucleus"/>
    <property type="evidence" value="ECO:0000314"/>
    <property type="project" value="TAIR"/>
</dbReference>
<dbReference type="GO" id="GO:0003700">
    <property type="term" value="F:DNA-binding transcription factor activity"/>
    <property type="evidence" value="ECO:0000250"/>
    <property type="project" value="TAIR"/>
</dbReference>
<dbReference type="GO" id="GO:0043565">
    <property type="term" value="F:sequence-specific DNA binding"/>
    <property type="evidence" value="ECO:0007669"/>
    <property type="project" value="InterPro"/>
</dbReference>
<dbReference type="FunFam" id="2.20.25.80:FF:000005">
    <property type="entry name" value="probable WRKY transcription factor 14"/>
    <property type="match status" value="1"/>
</dbReference>
<dbReference type="Gene3D" id="2.20.25.80">
    <property type="entry name" value="WRKY domain"/>
    <property type="match status" value="1"/>
</dbReference>
<dbReference type="InterPro" id="IPR003657">
    <property type="entry name" value="WRKY_dom"/>
</dbReference>
<dbReference type="InterPro" id="IPR036576">
    <property type="entry name" value="WRKY_dom_sf"/>
</dbReference>
<dbReference type="InterPro" id="IPR044810">
    <property type="entry name" value="WRKY_plant"/>
</dbReference>
<dbReference type="PANTHER" id="PTHR32096:SF140">
    <property type="entry name" value="WRKY TRANSCRIPTION FACTOR 14-RELATED"/>
    <property type="match status" value="1"/>
</dbReference>
<dbReference type="PANTHER" id="PTHR32096">
    <property type="entry name" value="WRKY TRANSCRIPTION FACTOR 30-RELATED-RELATED"/>
    <property type="match status" value="1"/>
</dbReference>
<dbReference type="Pfam" id="PF03106">
    <property type="entry name" value="WRKY"/>
    <property type="match status" value="1"/>
</dbReference>
<dbReference type="PIRSF" id="PIRSF038153">
    <property type="entry name" value="TF_WRKY_IIe"/>
    <property type="match status" value="1"/>
</dbReference>
<dbReference type="SMART" id="SM00774">
    <property type="entry name" value="WRKY"/>
    <property type="match status" value="1"/>
</dbReference>
<dbReference type="SUPFAM" id="SSF118290">
    <property type="entry name" value="WRKY DNA-binding domain"/>
    <property type="match status" value="1"/>
</dbReference>
<dbReference type="PROSITE" id="PS50811">
    <property type="entry name" value="WRKY"/>
    <property type="match status" value="1"/>
</dbReference>
<accession>Q9SA80</accession>
<accession>Q8LED4</accession>
<accession>Q96260</accession>
<feature type="chain" id="PRO_0000133656" description="Probable WRKY transcription factor 14">
    <location>
        <begin position="1"/>
        <end position="430"/>
    </location>
</feature>
<feature type="DNA-binding region" description="WRKY" evidence="2">
    <location>
        <begin position="211"/>
        <end position="277"/>
    </location>
</feature>
<feature type="region of interest" description="Disordered" evidence="3">
    <location>
        <begin position="283"/>
        <end position="366"/>
    </location>
</feature>
<feature type="compositionally biased region" description="Low complexity" evidence="3">
    <location>
        <begin position="286"/>
        <end position="306"/>
    </location>
</feature>
<feature type="compositionally biased region" description="Polar residues" evidence="3">
    <location>
        <begin position="307"/>
        <end position="319"/>
    </location>
</feature>
<feature type="compositionally biased region" description="Acidic residues" evidence="3">
    <location>
        <begin position="340"/>
        <end position="354"/>
    </location>
</feature>
<feature type="sequence conflict" description="In Ref. 6." evidence="4" ref="6">
    <location>
        <position position="200"/>
    </location>
</feature>
<feature type="sequence conflict" description="In Ref. 4; AAM62708." evidence="4" ref="4">
    <original>N</original>
    <variation>K</variation>
    <location>
        <position position="281"/>
    </location>
</feature>
<feature type="sequence conflict" description="In Ref. 6." evidence="4" ref="6">
    <original>P</original>
    <variation>PPPP</variation>
    <location>
        <position position="328"/>
    </location>
</feature>
<comment type="function">
    <text evidence="1">Transcription factor. Interacts specifically with the W box (5'-(T)TGAC[CT]-3'), a frequently occurring elicitor-responsive cis-acting element (By similarity).</text>
</comment>
<comment type="subcellular location">
    <subcellularLocation>
        <location evidence="4">Nucleus</location>
    </subcellularLocation>
</comment>
<comment type="similarity">
    <text evidence="4">Belongs to the WRKY group II-e family.</text>
</comment>
<comment type="sequence caution" evidence="4">
    <conflict type="erroneous initiation">
        <sequence resource="EMBL-CDS" id="AAD25752"/>
    </conflict>
</comment>
<comment type="sequence caution" evidence="4">
    <conflict type="frameshift">
        <sequence resource="EMBL-CDS" id="BAA13689"/>
    </conflict>
</comment>
<reference key="1">
    <citation type="journal article" date="2000" name="Nature">
        <title>Sequence and analysis of chromosome 1 of the plant Arabidopsis thaliana.</title>
        <authorList>
            <person name="Theologis A."/>
            <person name="Ecker J.R."/>
            <person name="Palm C.J."/>
            <person name="Federspiel N.A."/>
            <person name="Kaul S."/>
            <person name="White O."/>
            <person name="Alonso J."/>
            <person name="Altafi H."/>
            <person name="Araujo R."/>
            <person name="Bowman C.L."/>
            <person name="Brooks S.Y."/>
            <person name="Buehler E."/>
            <person name="Chan A."/>
            <person name="Chao Q."/>
            <person name="Chen H."/>
            <person name="Cheuk R.F."/>
            <person name="Chin C.W."/>
            <person name="Chung M.K."/>
            <person name="Conn L."/>
            <person name="Conway A.B."/>
            <person name="Conway A.R."/>
            <person name="Creasy T.H."/>
            <person name="Dewar K."/>
            <person name="Dunn P."/>
            <person name="Etgu P."/>
            <person name="Feldblyum T.V."/>
            <person name="Feng J.-D."/>
            <person name="Fong B."/>
            <person name="Fujii C.Y."/>
            <person name="Gill J.E."/>
            <person name="Goldsmith A.D."/>
            <person name="Haas B."/>
            <person name="Hansen N.F."/>
            <person name="Hughes B."/>
            <person name="Huizar L."/>
            <person name="Hunter J.L."/>
            <person name="Jenkins J."/>
            <person name="Johnson-Hopson C."/>
            <person name="Khan S."/>
            <person name="Khaykin E."/>
            <person name="Kim C.J."/>
            <person name="Koo H.L."/>
            <person name="Kremenetskaia I."/>
            <person name="Kurtz D.B."/>
            <person name="Kwan A."/>
            <person name="Lam B."/>
            <person name="Langin-Hooper S."/>
            <person name="Lee A."/>
            <person name="Lee J.M."/>
            <person name="Lenz C.A."/>
            <person name="Li J.H."/>
            <person name="Li Y.-P."/>
            <person name="Lin X."/>
            <person name="Liu S.X."/>
            <person name="Liu Z.A."/>
            <person name="Luros J.S."/>
            <person name="Maiti R."/>
            <person name="Marziali A."/>
            <person name="Militscher J."/>
            <person name="Miranda M."/>
            <person name="Nguyen M."/>
            <person name="Nierman W.C."/>
            <person name="Osborne B.I."/>
            <person name="Pai G."/>
            <person name="Peterson J."/>
            <person name="Pham P.K."/>
            <person name="Rizzo M."/>
            <person name="Rooney T."/>
            <person name="Rowley D."/>
            <person name="Sakano H."/>
            <person name="Salzberg S.L."/>
            <person name="Schwartz J.R."/>
            <person name="Shinn P."/>
            <person name="Southwick A.M."/>
            <person name="Sun H."/>
            <person name="Tallon L.J."/>
            <person name="Tambunga G."/>
            <person name="Toriumi M.J."/>
            <person name="Town C.D."/>
            <person name="Utterback T."/>
            <person name="Van Aken S."/>
            <person name="Vaysberg M."/>
            <person name="Vysotskaia V.S."/>
            <person name="Walker M."/>
            <person name="Wu D."/>
            <person name="Yu G."/>
            <person name="Fraser C.M."/>
            <person name="Venter J.C."/>
            <person name="Davis R.W."/>
        </authorList>
    </citation>
    <scope>NUCLEOTIDE SEQUENCE [LARGE SCALE GENOMIC DNA]</scope>
    <source>
        <strain>cv. Columbia</strain>
    </source>
</reference>
<reference key="2">
    <citation type="journal article" date="2017" name="Plant J.">
        <title>Araport11: a complete reannotation of the Arabidopsis thaliana reference genome.</title>
        <authorList>
            <person name="Cheng C.Y."/>
            <person name="Krishnakumar V."/>
            <person name="Chan A.P."/>
            <person name="Thibaud-Nissen F."/>
            <person name="Schobel S."/>
            <person name="Town C.D."/>
        </authorList>
    </citation>
    <scope>GENOME REANNOTATION</scope>
    <source>
        <strain>cv. Columbia</strain>
    </source>
</reference>
<reference key="3">
    <citation type="journal article" date="2003" name="Science">
        <title>Empirical analysis of transcriptional activity in the Arabidopsis genome.</title>
        <authorList>
            <person name="Yamada K."/>
            <person name="Lim J."/>
            <person name="Dale J.M."/>
            <person name="Chen H."/>
            <person name="Shinn P."/>
            <person name="Palm C.J."/>
            <person name="Southwick A.M."/>
            <person name="Wu H.C."/>
            <person name="Kim C.J."/>
            <person name="Nguyen M."/>
            <person name="Pham P.K."/>
            <person name="Cheuk R.F."/>
            <person name="Karlin-Newmann G."/>
            <person name="Liu S.X."/>
            <person name="Lam B."/>
            <person name="Sakano H."/>
            <person name="Wu T."/>
            <person name="Yu G."/>
            <person name="Miranda M."/>
            <person name="Quach H.L."/>
            <person name="Tripp M."/>
            <person name="Chang C.H."/>
            <person name="Lee J.M."/>
            <person name="Toriumi M.J."/>
            <person name="Chan M.M."/>
            <person name="Tang C.C."/>
            <person name="Onodera C.S."/>
            <person name="Deng J.M."/>
            <person name="Akiyama K."/>
            <person name="Ansari Y."/>
            <person name="Arakawa T."/>
            <person name="Banh J."/>
            <person name="Banno F."/>
            <person name="Bowser L."/>
            <person name="Brooks S.Y."/>
            <person name="Carninci P."/>
            <person name="Chao Q."/>
            <person name="Choy N."/>
            <person name="Enju A."/>
            <person name="Goldsmith A.D."/>
            <person name="Gurjal M."/>
            <person name="Hansen N.F."/>
            <person name="Hayashizaki Y."/>
            <person name="Johnson-Hopson C."/>
            <person name="Hsuan V.W."/>
            <person name="Iida K."/>
            <person name="Karnes M."/>
            <person name="Khan S."/>
            <person name="Koesema E."/>
            <person name="Ishida J."/>
            <person name="Jiang P.X."/>
            <person name="Jones T."/>
            <person name="Kawai J."/>
            <person name="Kamiya A."/>
            <person name="Meyers C."/>
            <person name="Nakajima M."/>
            <person name="Narusaka M."/>
            <person name="Seki M."/>
            <person name="Sakurai T."/>
            <person name="Satou M."/>
            <person name="Tamse R."/>
            <person name="Vaysberg M."/>
            <person name="Wallender E.K."/>
            <person name="Wong C."/>
            <person name="Yamamura Y."/>
            <person name="Yuan S."/>
            <person name="Shinozaki K."/>
            <person name="Davis R.W."/>
            <person name="Theologis A."/>
            <person name="Ecker J.R."/>
        </authorList>
    </citation>
    <scope>NUCLEOTIDE SEQUENCE [LARGE SCALE MRNA]</scope>
    <source>
        <strain>cv. Columbia</strain>
    </source>
</reference>
<reference key="4">
    <citation type="submission" date="2002-03" db="EMBL/GenBank/DDBJ databases">
        <title>Full-length cDNA from Arabidopsis thaliana.</title>
        <authorList>
            <person name="Brover V.V."/>
            <person name="Troukhan M.E."/>
            <person name="Alexandrov N.A."/>
            <person name="Lu Y.-P."/>
            <person name="Flavell R.B."/>
            <person name="Feldmann K.A."/>
        </authorList>
    </citation>
    <scope>NUCLEOTIDE SEQUENCE [LARGE SCALE MRNA]</scope>
</reference>
<reference key="5">
    <citation type="submission" date="2001-08" db="EMBL/GenBank/DDBJ databases">
        <title>Arabidopsis thaliana transcription factor WRKY14.</title>
        <authorList>
            <person name="Ulker B."/>
            <person name="Kushnir S."/>
            <person name="Somssich I.E."/>
        </authorList>
    </citation>
    <scope>NUCLEOTIDE SEQUENCE [MRNA] OF 10-430</scope>
    <source>
        <strain>cv. Columbia</strain>
        <tissue>Flower</tissue>
    </source>
</reference>
<reference key="6">
    <citation type="submission" date="1996-10" db="EMBL/GenBank/DDBJ databases">
        <title>Arabidopsis thaliana cDNA AR411 complements pheromone receptor deficient mutant of Shizosaccharomyces pombe.</title>
        <authorList>
            <person name="Ohto C."/>
            <person name="Hirayama T."/>
            <person name="Ishida C."/>
        </authorList>
    </citation>
    <scope>NUCLEOTIDE SEQUENCE [MRNA] OF 172-430</scope>
</reference>
<sequence length="430" mass="46802">MCSVSELLDMENFQGDLTDVVRGIGGHVLSPETPPSNIWPLPLSHPTPSPSDLNINPFGDPFVSMDDPLLQELNSITNSGYFSTVGDNNNNIHNNNGFLVPKVFEEDHIKSQCSIFPRIRISHSNIIHDSSPCNSPAMSAHVVAAAAAASPRGIINVDTNSPRNCLLVDGTTFSSQIQISSPRNLGLKRRKSQAKKVVCIPAPAAMNSRSSGEVVPSDLWAWRKYGQKPIKGSPFPRGYYRCSSSKGCSARKQVERSRTDPNMLVITYTSEHNHPWPIQRNALAGSTRSSTSSSSNPNPSKPSTANVNSSSIGSQNTIYLPSSTTPPPTLSSSAIKDERGDDMELENVDDDDDNQIAPYRPELHDHQHQPDDFFADLEELEGDSLSMLLSHGCGGDGKDKTTASDGISNFFGWSGDNNYNNYDDQDSRSL</sequence>
<name>WRK14_ARATH</name>
<keyword id="KW-0238">DNA-binding</keyword>
<keyword id="KW-0539">Nucleus</keyword>
<keyword id="KW-1185">Reference proteome</keyword>
<keyword id="KW-0804">Transcription</keyword>
<keyword id="KW-0805">Transcription regulation</keyword>